<comment type="function">
    <text evidence="1">NDH-1 shuttles electrons from NADH, via FMN and iron-sulfur (Fe-S) centers, to quinones in the respiratory chain. The immediate electron acceptor for the enzyme in this species is believed to be ubiquinone. Couples the redox reaction to proton translocation (for every two electrons transferred, four hydrogen ions are translocated across the cytoplasmic membrane), and thus conserves the redox energy in a proton gradient.</text>
</comment>
<comment type="catalytic activity">
    <reaction evidence="1">
        <text>a quinone + NADH + 5 H(+)(in) = a quinol + NAD(+) + 4 H(+)(out)</text>
        <dbReference type="Rhea" id="RHEA:57888"/>
        <dbReference type="ChEBI" id="CHEBI:15378"/>
        <dbReference type="ChEBI" id="CHEBI:24646"/>
        <dbReference type="ChEBI" id="CHEBI:57540"/>
        <dbReference type="ChEBI" id="CHEBI:57945"/>
        <dbReference type="ChEBI" id="CHEBI:132124"/>
    </reaction>
</comment>
<comment type="subunit">
    <text evidence="1">NDH-1 is composed of 14 different subunits. Subunits NuoB, C, D, E, F, and G constitute the peripheral sector of the complex.</text>
</comment>
<comment type="subcellular location">
    <subcellularLocation>
        <location evidence="1">Cell inner membrane</location>
        <topology evidence="1">Peripheral membrane protein</topology>
        <orientation evidence="1">Cytoplasmic side</orientation>
    </subcellularLocation>
</comment>
<comment type="similarity">
    <text evidence="1">Belongs to the complex I 30 kDa subunit family.</text>
</comment>
<feature type="chain" id="PRO_0000358110" description="NADH-quinone oxidoreductase subunit C">
    <location>
        <begin position="1"/>
        <end position="246"/>
    </location>
</feature>
<gene>
    <name evidence="1" type="primary">nuoC</name>
    <name type="ordered locus">Hhal_1763</name>
</gene>
<reference key="1">
    <citation type="submission" date="2006-12" db="EMBL/GenBank/DDBJ databases">
        <title>Complete sequence of Halorhodospira halophila SL1.</title>
        <authorList>
            <consortium name="US DOE Joint Genome Institute"/>
            <person name="Copeland A."/>
            <person name="Lucas S."/>
            <person name="Lapidus A."/>
            <person name="Barry K."/>
            <person name="Detter J.C."/>
            <person name="Glavina del Rio T."/>
            <person name="Hammon N."/>
            <person name="Israni S."/>
            <person name="Dalin E."/>
            <person name="Tice H."/>
            <person name="Pitluck S."/>
            <person name="Saunders E."/>
            <person name="Brettin T."/>
            <person name="Bruce D."/>
            <person name="Han C."/>
            <person name="Tapia R."/>
            <person name="Schmutz J."/>
            <person name="Larimer F."/>
            <person name="Land M."/>
            <person name="Hauser L."/>
            <person name="Kyrpides N."/>
            <person name="Mikhailova N."/>
            <person name="Hoff W."/>
            <person name="Richardson P."/>
        </authorList>
    </citation>
    <scope>NUCLEOTIDE SEQUENCE [LARGE SCALE GENOMIC DNA]</scope>
    <source>
        <strain>DSM 244 / SL1</strain>
    </source>
</reference>
<proteinExistence type="inferred from homology"/>
<protein>
    <recommendedName>
        <fullName evidence="1">NADH-quinone oxidoreductase subunit C</fullName>
        <ecNumber evidence="1">7.1.1.-</ecNumber>
    </recommendedName>
    <alternativeName>
        <fullName evidence="1">NADH dehydrogenase I subunit C</fullName>
    </alternativeName>
    <alternativeName>
        <fullName evidence="1">NDH-1 subunit C</fullName>
    </alternativeName>
</protein>
<keyword id="KW-0997">Cell inner membrane</keyword>
<keyword id="KW-1003">Cell membrane</keyword>
<keyword id="KW-0472">Membrane</keyword>
<keyword id="KW-0520">NAD</keyword>
<keyword id="KW-0874">Quinone</keyword>
<keyword id="KW-1185">Reference proteome</keyword>
<keyword id="KW-1278">Translocase</keyword>
<keyword id="KW-0813">Transport</keyword>
<keyword id="KW-0830">Ubiquinone</keyword>
<evidence type="ECO:0000255" key="1">
    <source>
        <dbReference type="HAMAP-Rule" id="MF_01357"/>
    </source>
</evidence>
<organism>
    <name type="scientific">Halorhodospira halophila (strain DSM 244 / SL1)</name>
    <name type="common">Ectothiorhodospira halophila (strain DSM 244 / SL1)</name>
    <dbReference type="NCBI Taxonomy" id="349124"/>
    <lineage>
        <taxon>Bacteria</taxon>
        <taxon>Pseudomonadati</taxon>
        <taxon>Pseudomonadota</taxon>
        <taxon>Gammaproteobacteria</taxon>
        <taxon>Chromatiales</taxon>
        <taxon>Ectothiorhodospiraceae</taxon>
        <taxon>Halorhodospira</taxon>
    </lineage>
</organism>
<name>NUOC_HALHL</name>
<sequence length="246" mass="27570">MAEPESLLEQLRGHFGGRLTDCWLERGEVTADVRPADLLAVMTELRDGAEWRFEQLSDVAGVDYAAYGQDEWITESATGTGFSRGVTEPGFGRLGLTGIYGVQSIEEQTGRRFAAVYQLLSLTHNHRLRVRCFAEDDDLPVLPSVTGIWPCANWAEREAFDLYGIVFEGHPDLRRILTDYGFVGHPFRKDFPLIGNVEPRYDPEKGRVVYGPVEIEPRVLVPRVIREDNRYAAPQKAEGTEGQADG</sequence>
<dbReference type="EC" id="7.1.1.-" evidence="1"/>
<dbReference type="EMBL" id="CP000544">
    <property type="protein sequence ID" value="ABM62527.1"/>
    <property type="molecule type" value="Genomic_DNA"/>
</dbReference>
<dbReference type="RefSeq" id="WP_011814549.1">
    <property type="nucleotide sequence ID" value="NC_008789.1"/>
</dbReference>
<dbReference type="SMR" id="A1WXW5"/>
<dbReference type="STRING" id="349124.Hhal_1763"/>
<dbReference type="KEGG" id="hha:Hhal_1763"/>
<dbReference type="eggNOG" id="COG0852">
    <property type="taxonomic scope" value="Bacteria"/>
</dbReference>
<dbReference type="HOGENOM" id="CLU_042628_2_1_6"/>
<dbReference type="OrthoDB" id="9803286at2"/>
<dbReference type="Proteomes" id="UP000000647">
    <property type="component" value="Chromosome"/>
</dbReference>
<dbReference type="GO" id="GO:0005886">
    <property type="term" value="C:plasma membrane"/>
    <property type="evidence" value="ECO:0007669"/>
    <property type="project" value="UniProtKB-SubCell"/>
</dbReference>
<dbReference type="GO" id="GO:0008137">
    <property type="term" value="F:NADH dehydrogenase (ubiquinone) activity"/>
    <property type="evidence" value="ECO:0007669"/>
    <property type="project" value="InterPro"/>
</dbReference>
<dbReference type="GO" id="GO:0050136">
    <property type="term" value="F:NADH:ubiquinone reductase (non-electrogenic) activity"/>
    <property type="evidence" value="ECO:0007669"/>
    <property type="project" value="UniProtKB-UniRule"/>
</dbReference>
<dbReference type="GO" id="GO:0048038">
    <property type="term" value="F:quinone binding"/>
    <property type="evidence" value="ECO:0007669"/>
    <property type="project" value="UniProtKB-KW"/>
</dbReference>
<dbReference type="Gene3D" id="3.30.460.80">
    <property type="entry name" value="NADH:ubiquinone oxidoreductase, 30kDa subunit"/>
    <property type="match status" value="1"/>
</dbReference>
<dbReference type="HAMAP" id="MF_01357">
    <property type="entry name" value="NDH1_NuoC"/>
    <property type="match status" value="1"/>
</dbReference>
<dbReference type="InterPro" id="IPR010218">
    <property type="entry name" value="NADH_DH_suC"/>
</dbReference>
<dbReference type="InterPro" id="IPR037232">
    <property type="entry name" value="NADH_quin_OxRdtase_su_C/D-like"/>
</dbReference>
<dbReference type="InterPro" id="IPR001268">
    <property type="entry name" value="NADH_UbQ_OxRdtase_30kDa_su"/>
</dbReference>
<dbReference type="InterPro" id="IPR020396">
    <property type="entry name" value="NADH_UbQ_OxRdtase_CS"/>
</dbReference>
<dbReference type="NCBIfam" id="NF004730">
    <property type="entry name" value="PRK06074.1-1"/>
    <property type="match status" value="1"/>
</dbReference>
<dbReference type="PANTHER" id="PTHR10884:SF14">
    <property type="entry name" value="NADH DEHYDROGENASE [UBIQUINONE] IRON-SULFUR PROTEIN 3, MITOCHONDRIAL"/>
    <property type="match status" value="1"/>
</dbReference>
<dbReference type="PANTHER" id="PTHR10884">
    <property type="entry name" value="NADH DEHYDROGENASE UBIQUINONE IRON-SULFUR PROTEIN 3"/>
    <property type="match status" value="1"/>
</dbReference>
<dbReference type="Pfam" id="PF00329">
    <property type="entry name" value="Complex1_30kDa"/>
    <property type="match status" value="1"/>
</dbReference>
<dbReference type="SUPFAM" id="SSF143243">
    <property type="entry name" value="Nqo5-like"/>
    <property type="match status" value="1"/>
</dbReference>
<dbReference type="PROSITE" id="PS00542">
    <property type="entry name" value="COMPLEX1_30K"/>
    <property type="match status" value="1"/>
</dbReference>
<accession>A1WXW5</accession>